<feature type="signal peptide" evidence="1">
    <location>
        <begin position="1"/>
        <end position="35"/>
    </location>
</feature>
<feature type="chain" id="PRO_0000251277" description="Glycerophosphodiester phosphodiesterase GDPDL1">
    <location>
        <begin position="36"/>
        <end position="763"/>
    </location>
</feature>
<feature type="topological domain" description="Extracellular" evidence="1">
    <location>
        <begin position="36"/>
        <end position="744"/>
    </location>
</feature>
<feature type="transmembrane region" description="Helical" evidence="1">
    <location>
        <begin position="745"/>
        <end position="762"/>
    </location>
</feature>
<feature type="topological domain" description="Cytoplasmic" evidence="1">
    <location>
        <position position="763"/>
    </location>
</feature>
<feature type="domain" description="GP-PDE 1">
    <location>
        <begin position="50"/>
        <end position="350"/>
    </location>
</feature>
<feature type="domain" description="GP-PDE 2">
    <location>
        <begin position="366"/>
        <end position="668"/>
    </location>
</feature>
<feature type="glycosylation site" description="N-linked (GlcNAc...) asparagine" evidence="1">
    <location>
        <position position="105"/>
    </location>
</feature>
<feature type="glycosylation site" description="N-linked (GlcNAc...) asparagine" evidence="1">
    <location>
        <position position="192"/>
    </location>
</feature>
<feature type="glycosylation site" description="N-linked (GlcNAc...) asparagine" evidence="1">
    <location>
        <position position="248"/>
    </location>
</feature>
<feature type="glycosylation site" description="N-linked (GlcNAc...) asparagine" evidence="1">
    <location>
        <position position="257"/>
    </location>
</feature>
<feature type="glycosylation site" description="N-linked (GlcNAc...) asparagine" evidence="1">
    <location>
        <position position="315"/>
    </location>
</feature>
<feature type="glycosylation site" description="N-linked (GlcNAc...) asparagine" evidence="1">
    <location>
        <position position="359"/>
    </location>
</feature>
<feature type="glycosylation site" description="N-linked (GlcNAc...) asparagine" evidence="1">
    <location>
        <position position="430"/>
    </location>
</feature>
<feature type="glycosylation site" description="N-linked (GlcNAc...) asparagine" evidence="1">
    <location>
        <position position="534"/>
    </location>
</feature>
<feature type="glycosylation site" description="N-linked (GlcNAc...) asparagine" evidence="1">
    <location>
        <position position="547"/>
    </location>
</feature>
<feature type="glycosylation site" description="N-linked (GlcNAc...) asparagine" evidence="1">
    <location>
        <position position="654"/>
    </location>
</feature>
<feature type="sequence conflict" description="In Ref. 3; AAP40466." evidence="5" ref="3">
    <original>C</original>
    <variation>Y</variation>
    <location>
        <position position="672"/>
    </location>
</feature>
<protein>
    <recommendedName>
        <fullName evidence="5">Glycerophosphodiester phosphodiesterase GDPDL1</fullName>
        <ecNumber evidence="2">3.1.4.46</ecNumber>
    </recommendedName>
    <alternativeName>
        <fullName evidence="4">Glycerophosphodiester phosphodiesterase-like 1</fullName>
        <shortName evidence="4">ATGDPDL1</shortName>
    </alternativeName>
    <alternativeName>
        <fullName evidence="3">Glycerophosphodiesterase-like 3</fullName>
    </alternativeName>
    <alternativeName>
        <fullName evidence="3">Protein SHV3-LIKE 2</fullName>
    </alternativeName>
</protein>
<dbReference type="EC" id="3.1.4.46" evidence="2"/>
<dbReference type="EMBL" id="AC007152">
    <property type="protein sequence ID" value="AAF98209.1"/>
    <property type="molecule type" value="Genomic_DNA"/>
</dbReference>
<dbReference type="EMBL" id="CP002684">
    <property type="protein sequence ID" value="AEE34579.1"/>
    <property type="molecule type" value="Genomic_DNA"/>
</dbReference>
<dbReference type="EMBL" id="BT008653">
    <property type="protein sequence ID" value="AAP40466.1"/>
    <property type="molecule type" value="mRNA"/>
</dbReference>
<dbReference type="PIR" id="F96693">
    <property type="entry name" value="F96693"/>
</dbReference>
<dbReference type="RefSeq" id="NP_176869.2">
    <molecule id="Q7Y208-1"/>
    <property type="nucleotide sequence ID" value="NM_105368.3"/>
</dbReference>
<dbReference type="SMR" id="Q7Y208"/>
<dbReference type="FunCoup" id="Q7Y208">
    <property type="interactions" value="1011"/>
</dbReference>
<dbReference type="STRING" id="3702.Q7Y208"/>
<dbReference type="GlyCosmos" id="Q7Y208">
    <property type="glycosylation" value="10 sites, No reported glycans"/>
</dbReference>
<dbReference type="GlyGen" id="Q7Y208">
    <property type="glycosylation" value="12 sites"/>
</dbReference>
<dbReference type="PaxDb" id="3702-AT1G66970.2"/>
<dbReference type="ProteomicsDB" id="248508">
    <molecule id="Q7Y208-1"/>
</dbReference>
<dbReference type="EnsemblPlants" id="AT1G66970.1">
    <molecule id="Q7Y208-1"/>
    <property type="protein sequence ID" value="AT1G66970.1"/>
    <property type="gene ID" value="AT1G66970"/>
</dbReference>
<dbReference type="GeneID" id="843015"/>
<dbReference type="Gramene" id="AT1G66970.1">
    <molecule id="Q7Y208-1"/>
    <property type="protein sequence ID" value="AT1G66970.1"/>
    <property type="gene ID" value="AT1G66970"/>
</dbReference>
<dbReference type="KEGG" id="ath:AT1G66970"/>
<dbReference type="Araport" id="AT1G66970"/>
<dbReference type="TAIR" id="AT1G66970">
    <property type="gene designation" value="SVL2"/>
</dbReference>
<dbReference type="eggNOG" id="KOG2258">
    <property type="taxonomic scope" value="Eukaryota"/>
</dbReference>
<dbReference type="HOGENOM" id="CLU_010414_0_1_1"/>
<dbReference type="InParanoid" id="Q7Y208"/>
<dbReference type="OMA" id="ANDAFMA"/>
<dbReference type="PhylomeDB" id="Q7Y208"/>
<dbReference type="SABIO-RK" id="Q7Y208"/>
<dbReference type="PRO" id="PR:Q7Y208"/>
<dbReference type="Proteomes" id="UP000006548">
    <property type="component" value="Chromosome 1"/>
</dbReference>
<dbReference type="ExpressionAtlas" id="Q7Y208">
    <property type="expression patterns" value="baseline and differential"/>
</dbReference>
<dbReference type="GO" id="GO:0016020">
    <property type="term" value="C:membrane"/>
    <property type="evidence" value="ECO:0000314"/>
    <property type="project" value="UniProtKB"/>
</dbReference>
<dbReference type="GO" id="GO:0005886">
    <property type="term" value="C:plasma membrane"/>
    <property type="evidence" value="ECO:0000314"/>
    <property type="project" value="UniProtKB"/>
</dbReference>
<dbReference type="GO" id="GO:0005509">
    <property type="term" value="F:calcium ion binding"/>
    <property type="evidence" value="ECO:0000314"/>
    <property type="project" value="UniProtKB"/>
</dbReference>
<dbReference type="GO" id="GO:0008889">
    <property type="term" value="F:glycerophosphodiester phosphodiesterase activity"/>
    <property type="evidence" value="ECO:0000314"/>
    <property type="project" value="UniProtKB"/>
</dbReference>
<dbReference type="GO" id="GO:0006071">
    <property type="term" value="P:glycerol metabolic process"/>
    <property type="evidence" value="ECO:0007669"/>
    <property type="project" value="UniProtKB-KW"/>
</dbReference>
<dbReference type="GO" id="GO:0006629">
    <property type="term" value="P:lipid metabolic process"/>
    <property type="evidence" value="ECO:0007669"/>
    <property type="project" value="InterPro"/>
</dbReference>
<dbReference type="CDD" id="cd08603">
    <property type="entry name" value="GDPD_SHV3_repeat_1"/>
    <property type="match status" value="1"/>
</dbReference>
<dbReference type="CDD" id="cd08604">
    <property type="entry name" value="GDPD_SHV3_repeat_2"/>
    <property type="match status" value="1"/>
</dbReference>
<dbReference type="FunFam" id="3.20.20.190:FF:000011">
    <property type="entry name" value="Glycerophosphodiester phosphodiesterase GDPDL3"/>
    <property type="match status" value="1"/>
</dbReference>
<dbReference type="FunFam" id="3.20.20.190:FF:000013">
    <property type="entry name" value="Glycerophosphodiester phosphodiesterase GDPDL3"/>
    <property type="match status" value="1"/>
</dbReference>
<dbReference type="Gene3D" id="3.20.20.190">
    <property type="entry name" value="Phosphatidylinositol (PI) phosphodiesterase"/>
    <property type="match status" value="2"/>
</dbReference>
<dbReference type="InterPro" id="IPR030395">
    <property type="entry name" value="GP_PDE_dom"/>
</dbReference>
<dbReference type="InterPro" id="IPR017946">
    <property type="entry name" value="PLC-like_Pdiesterase_TIM-brl"/>
</dbReference>
<dbReference type="PANTHER" id="PTHR43620:SF39">
    <property type="entry name" value="GLYCEROPHOSPHODIESTER PHOSPHODIESTERASE GDPDL1-RELATED"/>
    <property type="match status" value="1"/>
</dbReference>
<dbReference type="PANTHER" id="PTHR43620">
    <property type="entry name" value="GLYCEROPHOSPHORYL DIESTER PHOSPHODIESTERASE"/>
    <property type="match status" value="1"/>
</dbReference>
<dbReference type="Pfam" id="PF03009">
    <property type="entry name" value="GDPD"/>
    <property type="match status" value="2"/>
</dbReference>
<dbReference type="SUPFAM" id="SSF51695">
    <property type="entry name" value="PLC-like phosphodiesterases"/>
    <property type="match status" value="2"/>
</dbReference>
<dbReference type="PROSITE" id="PS51704">
    <property type="entry name" value="GP_PDE"/>
    <property type="match status" value="2"/>
</dbReference>
<organism>
    <name type="scientific">Arabidopsis thaliana</name>
    <name type="common">Mouse-ear cress</name>
    <dbReference type="NCBI Taxonomy" id="3702"/>
    <lineage>
        <taxon>Eukaryota</taxon>
        <taxon>Viridiplantae</taxon>
        <taxon>Streptophyta</taxon>
        <taxon>Embryophyta</taxon>
        <taxon>Tracheophyta</taxon>
        <taxon>Spermatophyta</taxon>
        <taxon>Magnoliopsida</taxon>
        <taxon>eudicotyledons</taxon>
        <taxon>Gunneridae</taxon>
        <taxon>Pentapetalae</taxon>
        <taxon>rosids</taxon>
        <taxon>malvids</taxon>
        <taxon>Brassicales</taxon>
        <taxon>Brassicaceae</taxon>
        <taxon>Camelineae</taxon>
        <taxon>Arabidopsis</taxon>
    </lineage>
</organism>
<sequence length="763" mass="83788">MNSRPSNPTKLVIRSSTLLFCGVVLIHLFAAQIDAQRSTSRWQTLNGDAPLVIARGGFSGLYPDSSIAAYQLATLTSVADVVLWCDLQLTKDGLGICFPDLNLANASTIDRVYPNREKSYSVNGVTTKGWFPNDFSLTELQNFLLIRGILSRTDRFDGNGYLISTIEDVVTTLNREGFWLNVQHDAFYEQQNLSMSSFLLSVSRTVSIDFISSPEVNFFKKITGSFGRNGPTFVFQFLGKEDFEPTTNRTYGSILSNLTFVKTFASGILVPKSYILPLDDEQYLVPHTSLVQDAHKAGLQVYVSGFANDVDIAYNYSSDPVSEYLSFVDNGDFSVDGVLSDFPITASAAVDCFSHIGRNATKQVDFLVISKDGASGDYPGCTDLAYEKAIKDGADVIDCSVQMSSDGVPFCLRSIDLRNSIAALQNTFSNRSTSVPEISSVPGIFTFSLTWPEIQSLTPAISNPFRVYRIFRNPREKNSGKLISLSQFLDLAKTYTSLSGVLISVENAAYLREKQGLDVVQAVLDTLTEAGYSNGTTTTKVMIQSTNSSVLVDFKKQSKYETVYKIEETIGNIRDSAIEDIKKFANAVVINKDSVFPNSDSFLTGQTNVVERLQKSQLPVYVELFRNEFVSQAYDFFSDATVEINAYIYGAGINGTITEFPFTAARYKRNRCLGREEVPPYMLPVNPGGLLNVMSPLSLPPAQAPNQDFIEADVTEPPLSPVIAKAPTSTPGTPSTIAQAPSGQTRLKLSLLLSVFFLSLLLL</sequence>
<evidence type="ECO:0000255" key="1"/>
<evidence type="ECO:0000269" key="2">
    <source>
    </source>
</evidence>
<evidence type="ECO:0000303" key="3">
    <source>
    </source>
</evidence>
<evidence type="ECO:0000303" key="4">
    <source>
    </source>
</evidence>
<evidence type="ECO:0000305" key="5"/>
<reference key="1">
    <citation type="journal article" date="2000" name="Nature">
        <title>Sequence and analysis of chromosome 1 of the plant Arabidopsis thaliana.</title>
        <authorList>
            <person name="Theologis A."/>
            <person name="Ecker J.R."/>
            <person name="Palm C.J."/>
            <person name="Federspiel N.A."/>
            <person name="Kaul S."/>
            <person name="White O."/>
            <person name="Alonso J."/>
            <person name="Altafi H."/>
            <person name="Araujo R."/>
            <person name="Bowman C.L."/>
            <person name="Brooks S.Y."/>
            <person name="Buehler E."/>
            <person name="Chan A."/>
            <person name="Chao Q."/>
            <person name="Chen H."/>
            <person name="Cheuk R.F."/>
            <person name="Chin C.W."/>
            <person name="Chung M.K."/>
            <person name="Conn L."/>
            <person name="Conway A.B."/>
            <person name="Conway A.R."/>
            <person name="Creasy T.H."/>
            <person name="Dewar K."/>
            <person name="Dunn P."/>
            <person name="Etgu P."/>
            <person name="Feldblyum T.V."/>
            <person name="Feng J.-D."/>
            <person name="Fong B."/>
            <person name="Fujii C.Y."/>
            <person name="Gill J.E."/>
            <person name="Goldsmith A.D."/>
            <person name="Haas B."/>
            <person name="Hansen N.F."/>
            <person name="Hughes B."/>
            <person name="Huizar L."/>
            <person name="Hunter J.L."/>
            <person name="Jenkins J."/>
            <person name="Johnson-Hopson C."/>
            <person name="Khan S."/>
            <person name="Khaykin E."/>
            <person name="Kim C.J."/>
            <person name="Koo H.L."/>
            <person name="Kremenetskaia I."/>
            <person name="Kurtz D.B."/>
            <person name="Kwan A."/>
            <person name="Lam B."/>
            <person name="Langin-Hooper S."/>
            <person name="Lee A."/>
            <person name="Lee J.M."/>
            <person name="Lenz C.A."/>
            <person name="Li J.H."/>
            <person name="Li Y.-P."/>
            <person name="Lin X."/>
            <person name="Liu S.X."/>
            <person name="Liu Z.A."/>
            <person name="Luros J.S."/>
            <person name="Maiti R."/>
            <person name="Marziali A."/>
            <person name="Militscher J."/>
            <person name="Miranda M."/>
            <person name="Nguyen M."/>
            <person name="Nierman W.C."/>
            <person name="Osborne B.I."/>
            <person name="Pai G."/>
            <person name="Peterson J."/>
            <person name="Pham P.K."/>
            <person name="Rizzo M."/>
            <person name="Rooney T."/>
            <person name="Rowley D."/>
            <person name="Sakano H."/>
            <person name="Salzberg S.L."/>
            <person name="Schwartz J.R."/>
            <person name="Shinn P."/>
            <person name="Southwick A.M."/>
            <person name="Sun H."/>
            <person name="Tallon L.J."/>
            <person name="Tambunga G."/>
            <person name="Toriumi M.J."/>
            <person name="Town C.D."/>
            <person name="Utterback T."/>
            <person name="Van Aken S."/>
            <person name="Vaysberg M."/>
            <person name="Vysotskaia V.S."/>
            <person name="Walker M."/>
            <person name="Wu D."/>
            <person name="Yu G."/>
            <person name="Fraser C.M."/>
            <person name="Venter J.C."/>
            <person name="Davis R.W."/>
        </authorList>
    </citation>
    <scope>NUCLEOTIDE SEQUENCE [LARGE SCALE GENOMIC DNA]</scope>
    <source>
        <strain>cv. Columbia</strain>
    </source>
</reference>
<reference key="2">
    <citation type="journal article" date="2017" name="Plant J.">
        <title>Araport11: a complete reannotation of the Arabidopsis thaliana reference genome.</title>
        <authorList>
            <person name="Cheng C.Y."/>
            <person name="Krishnakumar V."/>
            <person name="Chan A.P."/>
            <person name="Thibaud-Nissen F."/>
            <person name="Schobel S."/>
            <person name="Town C.D."/>
        </authorList>
    </citation>
    <scope>GENOME REANNOTATION</scope>
    <source>
        <strain>cv. Columbia</strain>
    </source>
</reference>
<reference key="3">
    <citation type="journal article" date="2003" name="Science">
        <title>Empirical analysis of transcriptional activity in the Arabidopsis genome.</title>
        <authorList>
            <person name="Yamada K."/>
            <person name="Lim J."/>
            <person name="Dale J.M."/>
            <person name="Chen H."/>
            <person name="Shinn P."/>
            <person name="Palm C.J."/>
            <person name="Southwick A.M."/>
            <person name="Wu H.C."/>
            <person name="Kim C.J."/>
            <person name="Nguyen M."/>
            <person name="Pham P.K."/>
            <person name="Cheuk R.F."/>
            <person name="Karlin-Newmann G."/>
            <person name="Liu S.X."/>
            <person name="Lam B."/>
            <person name="Sakano H."/>
            <person name="Wu T."/>
            <person name="Yu G."/>
            <person name="Miranda M."/>
            <person name="Quach H.L."/>
            <person name="Tripp M."/>
            <person name="Chang C.H."/>
            <person name="Lee J.M."/>
            <person name="Toriumi M.J."/>
            <person name="Chan M.M."/>
            <person name="Tang C.C."/>
            <person name="Onodera C.S."/>
            <person name="Deng J.M."/>
            <person name="Akiyama K."/>
            <person name="Ansari Y."/>
            <person name="Arakawa T."/>
            <person name="Banh J."/>
            <person name="Banno F."/>
            <person name="Bowser L."/>
            <person name="Brooks S.Y."/>
            <person name="Carninci P."/>
            <person name="Chao Q."/>
            <person name="Choy N."/>
            <person name="Enju A."/>
            <person name="Goldsmith A.D."/>
            <person name="Gurjal M."/>
            <person name="Hansen N.F."/>
            <person name="Hayashizaki Y."/>
            <person name="Johnson-Hopson C."/>
            <person name="Hsuan V.W."/>
            <person name="Iida K."/>
            <person name="Karnes M."/>
            <person name="Khan S."/>
            <person name="Koesema E."/>
            <person name="Ishida J."/>
            <person name="Jiang P.X."/>
            <person name="Jones T."/>
            <person name="Kawai J."/>
            <person name="Kamiya A."/>
            <person name="Meyers C."/>
            <person name="Nakajima M."/>
            <person name="Narusaka M."/>
            <person name="Seki M."/>
            <person name="Sakurai T."/>
            <person name="Satou M."/>
            <person name="Tamse R."/>
            <person name="Vaysberg M."/>
            <person name="Wallender E.K."/>
            <person name="Wong C."/>
            <person name="Yamamura Y."/>
            <person name="Yuan S."/>
            <person name="Shinozaki K."/>
            <person name="Davis R.W."/>
            <person name="Theologis A."/>
            <person name="Ecker J.R."/>
        </authorList>
    </citation>
    <scope>NUCLEOTIDE SEQUENCE [LARGE SCALE MRNA]</scope>
    <source>
        <strain>cv. Columbia</strain>
    </source>
</reference>
<reference key="4">
    <citation type="journal article" date="2008" name="Plant Cell Physiol.">
        <title>The glycerophosphoryl diester phosphodiesterase-like proteins SHV3 and its homologs play important roles in cell wall organization.</title>
        <authorList>
            <person name="Hayashi S."/>
            <person name="Ishii T."/>
            <person name="Matsunaga T."/>
            <person name="Tominaga R."/>
            <person name="Kuromori T."/>
            <person name="Wada T."/>
            <person name="Shinozaki K."/>
            <person name="Hirayama T."/>
        </authorList>
    </citation>
    <scope>TISSUE SPECIFICITY</scope>
</reference>
<reference key="5">
    <citation type="journal article" date="2011" name="Plant J.">
        <title>Characterization of the Arabidopsis glycerophosphodiester phosphodiesterase (GDPD) family reveals a role of the plastid-localized AtGDPD1 in maintaining cellular phosphate homeostasis under phosphate starvation.</title>
        <authorList>
            <person name="Cheng Y."/>
            <person name="Zhou W."/>
            <person name="El Sheery N.I."/>
            <person name="Peters C."/>
            <person name="Li M."/>
            <person name="Wang X."/>
            <person name="Huang J."/>
        </authorList>
    </citation>
    <scope>FUNCTION</scope>
    <scope>CATALYTIC ACTIVITY</scope>
    <scope>COFACTOR</scope>
    <scope>BIOPHYSICOCHEMICAL PROPERTIES</scope>
    <scope>TISSUE SPECIFICITY</scope>
    <scope>GENE FAMILY</scope>
    <scope>NOMENCLATURE</scope>
</reference>
<accession>Q7Y208</accession>
<accession>Q9FZI1</accession>
<name>GPDL1_ARATH</name>
<comment type="function">
    <text evidence="2">Hydrolyzes glycerolphosphoglycerol, glycerophosphocholine and glycerophosphoethanolamine in vitro.</text>
</comment>
<comment type="catalytic activity">
    <reaction evidence="2">
        <text>a sn-glycero-3-phosphodiester + H2O = an alcohol + sn-glycerol 3-phosphate + H(+)</text>
        <dbReference type="Rhea" id="RHEA:12969"/>
        <dbReference type="ChEBI" id="CHEBI:15377"/>
        <dbReference type="ChEBI" id="CHEBI:15378"/>
        <dbReference type="ChEBI" id="CHEBI:30879"/>
        <dbReference type="ChEBI" id="CHEBI:57597"/>
        <dbReference type="ChEBI" id="CHEBI:83408"/>
        <dbReference type="EC" id="3.1.4.46"/>
    </reaction>
</comment>
<comment type="cofactor">
    <cofactor evidence="2">
        <name>Ca(2+)</name>
        <dbReference type="ChEBI" id="CHEBI:29108"/>
    </cofactor>
</comment>
<comment type="biophysicochemical properties">
    <kinetics>
        <Vmax evidence="2">2.3 umol/min/mg enzyme toward glycerolphosphoglycerol</Vmax>
        <Vmax evidence="2">2.6 umol/min/mg enzyme toward glycerophosphocholine</Vmax>
        <Vmax evidence="2">2.8 umol/min/mg enzyme toward glycerophosphoethanolamine</Vmax>
    </kinetics>
</comment>
<comment type="subcellular location">
    <subcellularLocation>
        <location evidence="5">Cell membrane</location>
        <topology evidence="1">Single-pass type I membrane protein</topology>
    </subcellularLocation>
</comment>
<comment type="alternative products">
    <event type="alternative splicing"/>
    <isoform>
        <id>Q7Y208-1</id>
        <name>1</name>
        <sequence type="displayed"/>
    </isoform>
    <text>A number of isoforms are produced. According to EST sequences.</text>
</comment>
<comment type="tissue specificity">
    <text evidence="2">Expressed in rosette and cauline leaves, stems, flowers and siliques.</text>
</comment>
<comment type="similarity">
    <text evidence="5">Belongs to the glycerophosphoryl diester phosphodiesterase family.</text>
</comment>
<proteinExistence type="evidence at protein level"/>
<keyword id="KW-0025">Alternative splicing</keyword>
<keyword id="KW-1003">Cell membrane</keyword>
<keyword id="KW-0319">Glycerol metabolism</keyword>
<keyword id="KW-0325">Glycoprotein</keyword>
<keyword id="KW-0378">Hydrolase</keyword>
<keyword id="KW-0472">Membrane</keyword>
<keyword id="KW-1185">Reference proteome</keyword>
<keyword id="KW-0677">Repeat</keyword>
<keyword id="KW-0732">Signal</keyword>
<keyword id="KW-0812">Transmembrane</keyword>
<keyword id="KW-1133">Transmembrane helix</keyword>
<gene>
    <name evidence="4" type="primary">GDPDL1</name>
    <name evidence="3" type="synonym">GDPL3</name>
    <name evidence="3" type="synonym">SVL2</name>
    <name type="ordered locus">At1g66970</name>
    <name type="ORF">F1O19.5</name>
</gene>